<feature type="chain" id="PRO_0000079722" description="42 kDa cell wall protein">
    <location>
        <begin position="1"/>
        <end position="9" status="greater than"/>
    </location>
</feature>
<feature type="non-terminal residue" evidence="3 4">
    <location>
        <position position="9"/>
    </location>
</feature>
<accession>P82440</accession>
<accession>P80790</accession>
<name>CWP32_TOBAC</name>
<organism>
    <name type="scientific">Nicotiana tabacum</name>
    <name type="common">Common tobacco</name>
    <dbReference type="NCBI Taxonomy" id="4097"/>
    <lineage>
        <taxon>Eukaryota</taxon>
        <taxon>Viridiplantae</taxon>
        <taxon>Streptophyta</taxon>
        <taxon>Embryophyta</taxon>
        <taxon>Tracheophyta</taxon>
        <taxon>Spermatophyta</taxon>
        <taxon>Magnoliopsida</taxon>
        <taxon>eudicotyledons</taxon>
        <taxon>Gunneridae</taxon>
        <taxon>Pentapetalae</taxon>
        <taxon>asterids</taxon>
        <taxon>lamiids</taxon>
        <taxon>Solanales</taxon>
        <taxon>Solanaceae</taxon>
        <taxon>Nicotianoideae</taxon>
        <taxon>Nicotianeae</taxon>
        <taxon>Nicotiana</taxon>
    </lineage>
</organism>
<evidence type="ECO:0000269" key="1">
    <source>
    </source>
</evidence>
<evidence type="ECO:0000269" key="2">
    <source>
    </source>
</evidence>
<evidence type="ECO:0000303" key="3">
    <source>
    </source>
</evidence>
<evidence type="ECO:0000303" key="4">
    <source>
    </source>
</evidence>
<evidence type="ECO:0000305" key="5"/>
<dbReference type="Proteomes" id="UP000084051">
    <property type="component" value="Unplaced"/>
</dbReference>
<dbReference type="GO" id="GO:0005576">
    <property type="term" value="C:extracellular region"/>
    <property type="evidence" value="ECO:0007669"/>
    <property type="project" value="UniProtKB-KW"/>
</dbReference>
<reference evidence="5" key="1">
    <citation type="journal article" date="1997" name="J. Biol. Chem.">
        <title>Differential extraction and protein sequencing reveals major differences in patterns of primary cell wall proteins from plants.</title>
        <authorList>
            <person name="Robertson D."/>
            <person name="Mitchell G.P."/>
            <person name="Gilroy J.S."/>
            <person name="Gerrish C."/>
            <person name="Bolwell G.P."/>
            <person name="Slabas A.R."/>
        </authorList>
    </citation>
    <scope>PROTEIN SEQUENCE</scope>
    <scope>SUBCELLULAR LOCATION</scope>
</reference>
<reference evidence="5" key="2">
    <citation type="journal article" date="2001" name="Planta">
        <title>Proteomic analysis reveals a novel set of cell wall proteins in a transformed tobacco cell culture that synthesises secondary walls as determined by biochemical and morphological parameters.</title>
        <authorList>
            <person name="Blee K.A."/>
            <person name="Wheatley E.R."/>
            <person name="Bonham V.A."/>
            <person name="Mitchell G.P."/>
            <person name="Robertson D."/>
            <person name="Slabas A.R."/>
            <person name="Burrell M.M."/>
            <person name="Wojtaszek P."/>
            <person name="Bolwell G.P."/>
        </authorList>
    </citation>
    <scope>PROTEIN SEQUENCE</scope>
    <scope>SUBCELLULAR LOCATION</scope>
    <source>
        <strain evidence="1">cv. Petit Havana</strain>
    </source>
</reference>
<proteinExistence type="evidence at protein level"/>
<sequence length="9" mass="1053">QPEESVFFA</sequence>
<comment type="subcellular location">
    <subcellularLocation>
        <location evidence="1 2">Secreted</location>
        <location evidence="1 2">Cell wall</location>
    </subcellularLocation>
</comment>
<keyword id="KW-0134">Cell wall</keyword>
<keyword id="KW-0903">Direct protein sequencing</keyword>
<keyword id="KW-1185">Reference proteome</keyword>
<keyword id="KW-0964">Secreted</keyword>
<protein>
    <recommendedName>
        <fullName>42 kDa cell wall protein</fullName>
    </recommendedName>
    <alternativeName>
        <fullName>40 kDa cell wall protein</fullName>
    </alternativeName>
</protein>